<name>RNG_ECO57</name>
<keyword id="KW-0963">Cytoplasm</keyword>
<keyword id="KW-0255">Endonuclease</keyword>
<keyword id="KW-0378">Hydrolase</keyword>
<keyword id="KW-0460">Magnesium</keyword>
<keyword id="KW-0479">Metal-binding</keyword>
<keyword id="KW-0540">Nuclease</keyword>
<keyword id="KW-1185">Reference proteome</keyword>
<keyword id="KW-0694">RNA-binding</keyword>
<keyword id="KW-0698">rRNA processing</keyword>
<keyword id="KW-0699">rRNA-binding</keyword>
<keyword id="KW-0819">tRNA processing</keyword>
<keyword id="KW-0820">tRNA-binding</keyword>
<sequence>MTAELLVNVTPSETRVAYIDGGILQEIHIEREARRGIVGNIYKGRVSRVLPGMQAAFVDIGLDKAAFLHASDIMPHTECVAGEEQKQFTVRDISELVRQGQDLMVQVVKDPLGTKGARLTTDITLPSRYLVFMPGASHVGVSQRIESESERERLKKVVAEYCDEQGGFIIRTAAEGVGEAELASDAAYLKRVWTKVMERKKRPQTRYQLYGELALAQRVLRDFADAELDRIRVDSRLTYEALLEFTSEYIPEMTSKLEHYTGRQPIFDLFDVENEIQRALERKVELKSGGYLIIDQTEAMTTVDINTGAFVGHRNLDDTIFNTNIEATQAIARQLRLRNLGGIIIIDFIDMNNEDHRRRVLHSLEQALSKDRVKTSVNGFSALGLVEMTRKRTRESIEHVLCNECPTCHGRGTVKTVETVCYEIMREIVRVHHAYDSDRFLVYASPAVAEALKGEESHSLAEVEIFVGKQVKVQIEPLYNQEQFDVVMM</sequence>
<gene>
    <name type="primary">rng</name>
    <name type="synonym">cafA</name>
    <name type="ordered locus">Z4605</name>
    <name type="ordered locus">ECs4119</name>
</gene>
<evidence type="ECO:0000250" key="1">
    <source>
        <dbReference type="UniProtKB" id="P0A9J0"/>
    </source>
</evidence>
<evidence type="ECO:0000250" key="2">
    <source>
        <dbReference type="UniProtKB" id="P21513"/>
    </source>
</evidence>
<evidence type="ECO:0000255" key="3">
    <source>
        <dbReference type="PROSITE-ProRule" id="PRU00180"/>
    </source>
</evidence>
<evidence type="ECO:0000305" key="4"/>
<comment type="function">
    <text evidence="1">An endonuclease that acts in the processing of the 5'-end of 16S rRNA and 23S rRNA. It prefers 5'-monophosphorylated substrates and cleaves single-stranded sites rich in A and U residues; contributes to tRNA processing and mRNA turnover.</text>
</comment>
<comment type="cofactor">
    <cofactor evidence="2">
        <name>Mg(2+)</name>
        <dbReference type="ChEBI" id="CHEBI:18420"/>
    </cofactor>
    <text evidence="2">Binds 1 Mg(2+) ion per subunit.</text>
</comment>
<comment type="subunit">
    <text evidence="1">Homodimer, in equilibrium with possible higher multimers.</text>
</comment>
<comment type="subcellular location">
    <subcellularLocation>
        <location evidence="1">Cytoplasm</location>
    </subcellularLocation>
</comment>
<comment type="similarity">
    <text evidence="4">Belongs to the RNase E/G family. RNase G subfamily.</text>
</comment>
<comment type="sequence caution" evidence="4">
    <conflict type="erroneous initiation">
        <sequence resource="EMBL-CDS" id="AAG58374"/>
    </conflict>
    <text>Truncated N-terminus.</text>
</comment>
<protein>
    <recommendedName>
        <fullName>Ribonuclease G</fullName>
        <shortName>RNase G</shortName>
        <ecNumber>3.1.26.-</ecNumber>
    </recommendedName>
</protein>
<accession>P0A9J2</accession>
<accession>P25537</accession>
<accession>P76677</accession>
<dbReference type="EC" id="3.1.26.-"/>
<dbReference type="EMBL" id="AE005174">
    <property type="protein sequence ID" value="AAG58374.1"/>
    <property type="status" value="ALT_INIT"/>
    <property type="molecule type" value="Genomic_DNA"/>
</dbReference>
<dbReference type="EMBL" id="BA000007">
    <property type="protein sequence ID" value="BAB37542.1"/>
    <property type="molecule type" value="Genomic_DNA"/>
</dbReference>
<dbReference type="PIR" id="G91143">
    <property type="entry name" value="G91143"/>
</dbReference>
<dbReference type="RefSeq" id="NP_312146.1">
    <property type="nucleotide sequence ID" value="NC_002695.1"/>
</dbReference>
<dbReference type="RefSeq" id="WP_000123197.1">
    <property type="nucleotide sequence ID" value="NZ_VOAI01000014.1"/>
</dbReference>
<dbReference type="SMR" id="P0A9J2"/>
<dbReference type="STRING" id="155864.Z4605"/>
<dbReference type="GeneID" id="916034"/>
<dbReference type="GeneID" id="93778739"/>
<dbReference type="KEGG" id="ece:Z4605"/>
<dbReference type="KEGG" id="ecs:ECs_4119"/>
<dbReference type="PATRIC" id="fig|386585.9.peg.4300"/>
<dbReference type="eggNOG" id="COG1530">
    <property type="taxonomic scope" value="Bacteria"/>
</dbReference>
<dbReference type="HOGENOM" id="CLU_003468_5_3_6"/>
<dbReference type="OMA" id="IGTKGPR"/>
<dbReference type="Proteomes" id="UP000000558">
    <property type="component" value="Chromosome"/>
</dbReference>
<dbReference type="Proteomes" id="UP000002519">
    <property type="component" value="Chromosome"/>
</dbReference>
<dbReference type="GO" id="GO:0005737">
    <property type="term" value="C:cytoplasm"/>
    <property type="evidence" value="ECO:0007669"/>
    <property type="project" value="UniProtKB-SubCell"/>
</dbReference>
<dbReference type="GO" id="GO:0004519">
    <property type="term" value="F:endonuclease activity"/>
    <property type="evidence" value="ECO:0007669"/>
    <property type="project" value="UniProtKB-KW"/>
</dbReference>
<dbReference type="GO" id="GO:0046872">
    <property type="term" value="F:metal ion binding"/>
    <property type="evidence" value="ECO:0007669"/>
    <property type="project" value="UniProtKB-KW"/>
</dbReference>
<dbReference type="GO" id="GO:0004540">
    <property type="term" value="F:RNA nuclease activity"/>
    <property type="evidence" value="ECO:0007669"/>
    <property type="project" value="InterPro"/>
</dbReference>
<dbReference type="GO" id="GO:0019843">
    <property type="term" value="F:rRNA binding"/>
    <property type="evidence" value="ECO:0007669"/>
    <property type="project" value="UniProtKB-KW"/>
</dbReference>
<dbReference type="GO" id="GO:0000049">
    <property type="term" value="F:tRNA binding"/>
    <property type="evidence" value="ECO:0007669"/>
    <property type="project" value="UniProtKB-KW"/>
</dbReference>
<dbReference type="GO" id="GO:0006364">
    <property type="term" value="P:rRNA processing"/>
    <property type="evidence" value="ECO:0007669"/>
    <property type="project" value="UniProtKB-KW"/>
</dbReference>
<dbReference type="GO" id="GO:0008033">
    <property type="term" value="P:tRNA processing"/>
    <property type="evidence" value="ECO:0007669"/>
    <property type="project" value="UniProtKB-KW"/>
</dbReference>
<dbReference type="CDD" id="cd04453">
    <property type="entry name" value="S1_RNase_E"/>
    <property type="match status" value="1"/>
</dbReference>
<dbReference type="FunFam" id="2.40.50.140:FF:000028">
    <property type="entry name" value="Ribonuclease G"/>
    <property type="match status" value="1"/>
</dbReference>
<dbReference type="FunFam" id="3.40.1260.20:FF:000001">
    <property type="entry name" value="Ribonuclease G Rng"/>
    <property type="match status" value="1"/>
</dbReference>
<dbReference type="Gene3D" id="2.40.50.140">
    <property type="entry name" value="Nucleic acid-binding proteins"/>
    <property type="match status" value="1"/>
</dbReference>
<dbReference type="Gene3D" id="3.40.1260.20">
    <property type="entry name" value="Ribonuclease E, catalytic domain"/>
    <property type="match status" value="1"/>
</dbReference>
<dbReference type="InterPro" id="IPR012340">
    <property type="entry name" value="NA-bd_OB-fold"/>
</dbReference>
<dbReference type="InterPro" id="IPR019307">
    <property type="entry name" value="RNA-bd_AU-1/RNase_E/G"/>
</dbReference>
<dbReference type="InterPro" id="IPR004659">
    <property type="entry name" value="RNase_E/G"/>
</dbReference>
<dbReference type="InterPro" id="IPR048583">
    <property type="entry name" value="RNase_E_G_thioredoxin-like"/>
</dbReference>
<dbReference type="InterPro" id="IPR003029">
    <property type="entry name" value="S1_domain"/>
</dbReference>
<dbReference type="NCBIfam" id="NF008689">
    <property type="entry name" value="PRK11712.1"/>
    <property type="match status" value="1"/>
</dbReference>
<dbReference type="NCBIfam" id="TIGR00757">
    <property type="entry name" value="RNaseEG"/>
    <property type="match status" value="1"/>
</dbReference>
<dbReference type="PANTHER" id="PTHR30001">
    <property type="entry name" value="RIBONUCLEASE"/>
    <property type="match status" value="1"/>
</dbReference>
<dbReference type="PANTHER" id="PTHR30001:SF0">
    <property type="entry name" value="RIBONUCLEASE G"/>
    <property type="match status" value="1"/>
</dbReference>
<dbReference type="Pfam" id="PF10150">
    <property type="entry name" value="RNase_E_G"/>
    <property type="match status" value="1"/>
</dbReference>
<dbReference type="Pfam" id="PF20833">
    <property type="entry name" value="RNase_E_G_Thio"/>
    <property type="match status" value="1"/>
</dbReference>
<dbReference type="Pfam" id="PF00575">
    <property type="entry name" value="S1"/>
    <property type="match status" value="1"/>
</dbReference>
<dbReference type="SMART" id="SM00316">
    <property type="entry name" value="S1"/>
    <property type="match status" value="1"/>
</dbReference>
<dbReference type="SUPFAM" id="SSF50249">
    <property type="entry name" value="Nucleic acid-binding proteins"/>
    <property type="match status" value="1"/>
</dbReference>
<dbReference type="PROSITE" id="PS50126">
    <property type="entry name" value="S1"/>
    <property type="match status" value="1"/>
</dbReference>
<feature type="initiator methionine" description="Removed" evidence="1">
    <location>
        <position position="1"/>
    </location>
</feature>
<feature type="chain" id="PRO_0000097381" description="Ribonuclease G">
    <location>
        <begin position="2"/>
        <end position="489"/>
    </location>
</feature>
<feature type="domain" description="S1 motif" evidence="3">
    <location>
        <begin position="39"/>
        <end position="128"/>
    </location>
</feature>
<feature type="binding site" evidence="2">
    <location>
        <position position="304"/>
    </location>
    <ligand>
        <name>Mg(2+)</name>
        <dbReference type="ChEBI" id="CHEBI:18420"/>
        <note>catalytic</note>
    </ligand>
</feature>
<feature type="binding site" evidence="2">
    <location>
        <position position="347"/>
    </location>
    <ligand>
        <name>Mg(2+)</name>
        <dbReference type="ChEBI" id="CHEBI:18420"/>
        <note>catalytic</note>
    </ligand>
</feature>
<reference key="1">
    <citation type="journal article" date="2001" name="Nature">
        <title>Genome sequence of enterohaemorrhagic Escherichia coli O157:H7.</title>
        <authorList>
            <person name="Perna N.T."/>
            <person name="Plunkett G. III"/>
            <person name="Burland V."/>
            <person name="Mau B."/>
            <person name="Glasner J.D."/>
            <person name="Rose D.J."/>
            <person name="Mayhew G.F."/>
            <person name="Evans P.S."/>
            <person name="Gregor J."/>
            <person name="Kirkpatrick H.A."/>
            <person name="Posfai G."/>
            <person name="Hackett J."/>
            <person name="Klink S."/>
            <person name="Boutin A."/>
            <person name="Shao Y."/>
            <person name="Miller L."/>
            <person name="Grotbeck E.J."/>
            <person name="Davis N.W."/>
            <person name="Lim A."/>
            <person name="Dimalanta E.T."/>
            <person name="Potamousis K."/>
            <person name="Apodaca J."/>
            <person name="Anantharaman T.S."/>
            <person name="Lin J."/>
            <person name="Yen G."/>
            <person name="Schwartz D.C."/>
            <person name="Welch R.A."/>
            <person name="Blattner F.R."/>
        </authorList>
    </citation>
    <scope>NUCLEOTIDE SEQUENCE [LARGE SCALE GENOMIC DNA]</scope>
    <source>
        <strain>O157:H7 / EDL933 / ATCC 700927 / EHEC</strain>
    </source>
</reference>
<reference key="2">
    <citation type="journal article" date="2001" name="DNA Res.">
        <title>Complete genome sequence of enterohemorrhagic Escherichia coli O157:H7 and genomic comparison with a laboratory strain K-12.</title>
        <authorList>
            <person name="Hayashi T."/>
            <person name="Makino K."/>
            <person name="Ohnishi M."/>
            <person name="Kurokawa K."/>
            <person name="Ishii K."/>
            <person name="Yokoyama K."/>
            <person name="Han C.-G."/>
            <person name="Ohtsubo E."/>
            <person name="Nakayama K."/>
            <person name="Murata T."/>
            <person name="Tanaka M."/>
            <person name="Tobe T."/>
            <person name="Iida T."/>
            <person name="Takami H."/>
            <person name="Honda T."/>
            <person name="Sasakawa C."/>
            <person name="Ogasawara N."/>
            <person name="Yasunaga T."/>
            <person name="Kuhara S."/>
            <person name="Shiba T."/>
            <person name="Hattori M."/>
            <person name="Shinagawa H."/>
        </authorList>
    </citation>
    <scope>NUCLEOTIDE SEQUENCE [LARGE SCALE GENOMIC DNA]</scope>
    <source>
        <strain>O157:H7 / Sakai / RIMD 0509952 / EHEC</strain>
    </source>
</reference>
<organism>
    <name type="scientific">Escherichia coli O157:H7</name>
    <dbReference type="NCBI Taxonomy" id="83334"/>
    <lineage>
        <taxon>Bacteria</taxon>
        <taxon>Pseudomonadati</taxon>
        <taxon>Pseudomonadota</taxon>
        <taxon>Gammaproteobacteria</taxon>
        <taxon>Enterobacterales</taxon>
        <taxon>Enterobacteriaceae</taxon>
        <taxon>Escherichia</taxon>
    </lineage>
</organism>
<proteinExistence type="inferred from homology"/>